<name>MATK_NICPA</name>
<proteinExistence type="inferred from homology"/>
<reference key="1">
    <citation type="journal article" date="2000" name="Plant Biol.">
        <title>Molecular phylogeny of Nicotiana (Solanaceae) based on the nucleotide sequence of the matK gene.</title>
        <authorList>
            <person name="Aoki S."/>
            <person name="Ito M."/>
        </authorList>
    </citation>
    <scope>NUCLEOTIDE SEQUENCE [GENOMIC DNA]</scope>
</reference>
<organism>
    <name type="scientific">Nicotiana paniculata</name>
    <dbReference type="NCBI Taxonomy" id="62141"/>
    <lineage>
        <taxon>Eukaryota</taxon>
        <taxon>Viridiplantae</taxon>
        <taxon>Streptophyta</taxon>
        <taxon>Embryophyta</taxon>
        <taxon>Tracheophyta</taxon>
        <taxon>Spermatophyta</taxon>
        <taxon>Magnoliopsida</taxon>
        <taxon>eudicotyledons</taxon>
        <taxon>Gunneridae</taxon>
        <taxon>Pentapetalae</taxon>
        <taxon>asterids</taxon>
        <taxon>lamiids</taxon>
        <taxon>Solanales</taxon>
        <taxon>Solanaceae</taxon>
        <taxon>Nicotianoideae</taxon>
        <taxon>Nicotianeae</taxon>
        <taxon>Nicotiana</taxon>
    </lineage>
</organism>
<protein>
    <recommendedName>
        <fullName evidence="1">Maturase K</fullName>
    </recommendedName>
    <alternativeName>
        <fullName evidence="1">Intron maturase</fullName>
    </alternativeName>
</protein>
<sequence length="509" mass="60271">MEEIQRYLQPDRSQQHNFLYPLIFQEYIYALAHDHGLNRNRSVLLENPGYNNKFSLLIVKRLITRMYQQNNFLISTNDSNKNEFLGCNKSLYSQMISEGFAFIVEIPFSLRLISSLSSFEGKKIFKSHNLRSIHSTFPFLEDNFSHLNYVLDILIPYPVHLEILVQTLRYWVKDASSLHLLRFFLHEFWNLNSLITSKKPGYSFSKKNQRFFFFLYNSYVYECESTFVFLRNQSSRLRSTSFGALLERINFYGKMERLVEVFTKDLQVTLWLFKDPFMHYVRYQEKSILASKGTFLLMNKWKFYLVNFWQCHFSLCFHTGRIHINQLSNHSRDFMGYLSSVRLNPSMLRSQMLENSFLINNAIKKFDTLVPIIPLIGSLAKANFCTVLGHPISKPVWSDLSDSDIIDRFGRICRNLFHYYSGSSKKKTLYRIKYILRLSCARTLARKHKSTVRTFLKRSGSELLEEFLTSEEQVLSLTFPRASSSLWGVYRSRIWYLDIFCINDLANYQ</sequence>
<dbReference type="EMBL" id="AB039988">
    <property type="protein sequence ID" value="BAB64839.1"/>
    <property type="molecule type" value="Genomic_DNA"/>
</dbReference>
<dbReference type="GO" id="GO:0009507">
    <property type="term" value="C:chloroplast"/>
    <property type="evidence" value="ECO:0007669"/>
    <property type="project" value="UniProtKB-SubCell"/>
</dbReference>
<dbReference type="GO" id="GO:0003723">
    <property type="term" value="F:RNA binding"/>
    <property type="evidence" value="ECO:0007669"/>
    <property type="project" value="UniProtKB-KW"/>
</dbReference>
<dbReference type="GO" id="GO:0006397">
    <property type="term" value="P:mRNA processing"/>
    <property type="evidence" value="ECO:0007669"/>
    <property type="project" value="UniProtKB-KW"/>
</dbReference>
<dbReference type="GO" id="GO:0008380">
    <property type="term" value="P:RNA splicing"/>
    <property type="evidence" value="ECO:0007669"/>
    <property type="project" value="UniProtKB-UniRule"/>
</dbReference>
<dbReference type="GO" id="GO:0008033">
    <property type="term" value="P:tRNA processing"/>
    <property type="evidence" value="ECO:0007669"/>
    <property type="project" value="UniProtKB-KW"/>
</dbReference>
<dbReference type="HAMAP" id="MF_01390">
    <property type="entry name" value="MatK"/>
    <property type="match status" value="1"/>
</dbReference>
<dbReference type="InterPro" id="IPR024937">
    <property type="entry name" value="Domain_X"/>
</dbReference>
<dbReference type="InterPro" id="IPR002866">
    <property type="entry name" value="Maturase_MatK"/>
</dbReference>
<dbReference type="InterPro" id="IPR024942">
    <property type="entry name" value="Maturase_MatK_N"/>
</dbReference>
<dbReference type="PANTHER" id="PTHR34811">
    <property type="entry name" value="MATURASE K"/>
    <property type="match status" value="1"/>
</dbReference>
<dbReference type="PANTHER" id="PTHR34811:SF1">
    <property type="entry name" value="MATURASE K"/>
    <property type="match status" value="1"/>
</dbReference>
<dbReference type="Pfam" id="PF01348">
    <property type="entry name" value="Intron_maturas2"/>
    <property type="match status" value="1"/>
</dbReference>
<dbReference type="Pfam" id="PF01824">
    <property type="entry name" value="MatK_N"/>
    <property type="match status" value="1"/>
</dbReference>
<accession>Q95DR2</accession>
<keyword id="KW-0150">Chloroplast</keyword>
<keyword id="KW-0507">mRNA processing</keyword>
<keyword id="KW-0934">Plastid</keyword>
<keyword id="KW-0694">RNA-binding</keyword>
<keyword id="KW-0819">tRNA processing</keyword>
<comment type="function">
    <text evidence="1">Usually encoded in the trnK tRNA gene intron. Probably assists in splicing its own and other chloroplast group II introns.</text>
</comment>
<comment type="subcellular location">
    <subcellularLocation>
        <location>Plastid</location>
        <location>Chloroplast</location>
    </subcellularLocation>
</comment>
<comment type="similarity">
    <text evidence="1">Belongs to the intron maturase 2 family. MatK subfamily.</text>
</comment>
<gene>
    <name evidence="1" type="primary">matK</name>
</gene>
<evidence type="ECO:0000255" key="1">
    <source>
        <dbReference type="HAMAP-Rule" id="MF_01390"/>
    </source>
</evidence>
<geneLocation type="chloroplast"/>
<feature type="chain" id="PRO_0000143544" description="Maturase K">
    <location>
        <begin position="1"/>
        <end position="509"/>
    </location>
</feature>